<gene>
    <name evidence="1" type="primary">miaA</name>
    <name type="ordered locus">BPSL2815</name>
</gene>
<evidence type="ECO:0000255" key="1">
    <source>
        <dbReference type="HAMAP-Rule" id="MF_00185"/>
    </source>
</evidence>
<accession>Q63R58</accession>
<name>MIAA_BURPS</name>
<proteinExistence type="inferred from homology"/>
<keyword id="KW-0067">ATP-binding</keyword>
<keyword id="KW-0460">Magnesium</keyword>
<keyword id="KW-0547">Nucleotide-binding</keyword>
<keyword id="KW-1185">Reference proteome</keyword>
<keyword id="KW-0808">Transferase</keyword>
<keyword id="KW-0819">tRNA processing</keyword>
<dbReference type="EC" id="2.5.1.75" evidence="1"/>
<dbReference type="EMBL" id="BX571965">
    <property type="protein sequence ID" value="CAH36825.1"/>
    <property type="molecule type" value="Genomic_DNA"/>
</dbReference>
<dbReference type="RefSeq" id="WP_004527674.1">
    <property type="nucleotide sequence ID" value="NZ_CP009538.1"/>
</dbReference>
<dbReference type="RefSeq" id="YP_109410.1">
    <property type="nucleotide sequence ID" value="NC_006350.1"/>
</dbReference>
<dbReference type="SMR" id="Q63R58"/>
<dbReference type="STRING" id="272560.BPSL2815"/>
<dbReference type="KEGG" id="bps:BPSL2815"/>
<dbReference type="PATRIC" id="fig|272560.51.peg.2490"/>
<dbReference type="eggNOG" id="COG0324">
    <property type="taxonomic scope" value="Bacteria"/>
</dbReference>
<dbReference type="Proteomes" id="UP000000605">
    <property type="component" value="Chromosome 1"/>
</dbReference>
<dbReference type="GO" id="GO:0005524">
    <property type="term" value="F:ATP binding"/>
    <property type="evidence" value="ECO:0007669"/>
    <property type="project" value="UniProtKB-UniRule"/>
</dbReference>
<dbReference type="GO" id="GO:0052381">
    <property type="term" value="F:tRNA dimethylallyltransferase activity"/>
    <property type="evidence" value="ECO:0007669"/>
    <property type="project" value="UniProtKB-UniRule"/>
</dbReference>
<dbReference type="GO" id="GO:0006400">
    <property type="term" value="P:tRNA modification"/>
    <property type="evidence" value="ECO:0007669"/>
    <property type="project" value="TreeGrafter"/>
</dbReference>
<dbReference type="FunFam" id="1.10.20.140:FF:000001">
    <property type="entry name" value="tRNA dimethylallyltransferase"/>
    <property type="match status" value="1"/>
</dbReference>
<dbReference type="Gene3D" id="1.10.20.140">
    <property type="match status" value="1"/>
</dbReference>
<dbReference type="Gene3D" id="3.40.50.300">
    <property type="entry name" value="P-loop containing nucleotide triphosphate hydrolases"/>
    <property type="match status" value="1"/>
</dbReference>
<dbReference type="HAMAP" id="MF_00185">
    <property type="entry name" value="IPP_trans"/>
    <property type="match status" value="1"/>
</dbReference>
<dbReference type="InterPro" id="IPR039657">
    <property type="entry name" value="Dimethylallyltransferase"/>
</dbReference>
<dbReference type="InterPro" id="IPR018022">
    <property type="entry name" value="IPT"/>
</dbReference>
<dbReference type="InterPro" id="IPR027417">
    <property type="entry name" value="P-loop_NTPase"/>
</dbReference>
<dbReference type="NCBIfam" id="TIGR00174">
    <property type="entry name" value="miaA"/>
    <property type="match status" value="1"/>
</dbReference>
<dbReference type="PANTHER" id="PTHR11088">
    <property type="entry name" value="TRNA DIMETHYLALLYLTRANSFERASE"/>
    <property type="match status" value="1"/>
</dbReference>
<dbReference type="PANTHER" id="PTHR11088:SF60">
    <property type="entry name" value="TRNA DIMETHYLALLYLTRANSFERASE"/>
    <property type="match status" value="1"/>
</dbReference>
<dbReference type="Pfam" id="PF01715">
    <property type="entry name" value="IPPT"/>
    <property type="match status" value="1"/>
</dbReference>
<dbReference type="SUPFAM" id="SSF52540">
    <property type="entry name" value="P-loop containing nucleoside triphosphate hydrolases"/>
    <property type="match status" value="2"/>
</dbReference>
<protein>
    <recommendedName>
        <fullName evidence="1">tRNA dimethylallyltransferase</fullName>
        <ecNumber evidence="1">2.5.1.75</ecNumber>
    </recommendedName>
    <alternativeName>
        <fullName evidence="1">Dimethylallyl diphosphate:tRNA dimethylallyltransferase</fullName>
        <shortName evidence="1">DMAPP:tRNA dimethylallyltransferase</shortName>
        <shortName evidence="1">DMATase</shortName>
    </alternativeName>
    <alternativeName>
        <fullName evidence="1">Isopentenyl-diphosphate:tRNA isopentenyltransferase</fullName>
        <shortName evidence="1">IPP transferase</shortName>
        <shortName evidence="1">IPPT</shortName>
        <shortName evidence="1">IPTase</shortName>
    </alternativeName>
</protein>
<comment type="function">
    <text evidence="1">Catalyzes the transfer of a dimethylallyl group onto the adenine at position 37 in tRNAs that read codons beginning with uridine, leading to the formation of N6-(dimethylallyl)adenosine (i(6)A).</text>
</comment>
<comment type="catalytic activity">
    <reaction evidence="1">
        <text>adenosine(37) in tRNA + dimethylallyl diphosphate = N(6)-dimethylallyladenosine(37) in tRNA + diphosphate</text>
        <dbReference type="Rhea" id="RHEA:26482"/>
        <dbReference type="Rhea" id="RHEA-COMP:10162"/>
        <dbReference type="Rhea" id="RHEA-COMP:10375"/>
        <dbReference type="ChEBI" id="CHEBI:33019"/>
        <dbReference type="ChEBI" id="CHEBI:57623"/>
        <dbReference type="ChEBI" id="CHEBI:74411"/>
        <dbReference type="ChEBI" id="CHEBI:74415"/>
        <dbReference type="EC" id="2.5.1.75"/>
    </reaction>
</comment>
<comment type="cofactor">
    <cofactor evidence="1">
        <name>Mg(2+)</name>
        <dbReference type="ChEBI" id="CHEBI:18420"/>
    </cofactor>
</comment>
<comment type="subunit">
    <text evidence="1">Monomer.</text>
</comment>
<comment type="similarity">
    <text evidence="1">Belongs to the IPP transferase family.</text>
</comment>
<organism>
    <name type="scientific">Burkholderia pseudomallei (strain K96243)</name>
    <dbReference type="NCBI Taxonomy" id="272560"/>
    <lineage>
        <taxon>Bacteria</taxon>
        <taxon>Pseudomonadati</taxon>
        <taxon>Pseudomonadota</taxon>
        <taxon>Betaproteobacteria</taxon>
        <taxon>Burkholderiales</taxon>
        <taxon>Burkholderiaceae</taxon>
        <taxon>Burkholderia</taxon>
        <taxon>pseudomallei group</taxon>
    </lineage>
</organism>
<sequence length="324" mass="35096">MSERNAASARTVACLLGPTASGKTAAALALAARRPIEIVSVDSALVYRGMDIGTAKPTRDERAAVPHHLIDIVDPADAYSAAEFRADALRLVAQIAARGRTPLLAGGTMLYYRALTQGLNDLPAADPDVRATLDADAARDGWPALHARLAGIDPATAARLAPNDSQRIQRALEVYLLTGQPMSALLAAPPRDDDAAAGLRFVPVALEPSERAVLHARIAARFDAMLEAGFIDEVERLRRRDDLHLGLPSMRCVGYRQAWEYLDGCTDYRTMRDKGIFATRQLCKRQLTWLRAMPERIVVDCCAPDATVRAVDALERVLDGRAPA</sequence>
<reference key="1">
    <citation type="journal article" date="2004" name="Proc. Natl. Acad. Sci. U.S.A.">
        <title>Genomic plasticity of the causative agent of melioidosis, Burkholderia pseudomallei.</title>
        <authorList>
            <person name="Holden M.T.G."/>
            <person name="Titball R.W."/>
            <person name="Peacock S.J."/>
            <person name="Cerdeno-Tarraga A.-M."/>
            <person name="Atkins T."/>
            <person name="Crossman L.C."/>
            <person name="Pitt T."/>
            <person name="Churcher C."/>
            <person name="Mungall K.L."/>
            <person name="Bentley S.D."/>
            <person name="Sebaihia M."/>
            <person name="Thomson N.R."/>
            <person name="Bason N."/>
            <person name="Beacham I.R."/>
            <person name="Brooks K."/>
            <person name="Brown K.A."/>
            <person name="Brown N.F."/>
            <person name="Challis G.L."/>
            <person name="Cherevach I."/>
            <person name="Chillingworth T."/>
            <person name="Cronin A."/>
            <person name="Crossett B."/>
            <person name="Davis P."/>
            <person name="DeShazer D."/>
            <person name="Feltwell T."/>
            <person name="Fraser A."/>
            <person name="Hance Z."/>
            <person name="Hauser H."/>
            <person name="Holroyd S."/>
            <person name="Jagels K."/>
            <person name="Keith K.E."/>
            <person name="Maddison M."/>
            <person name="Moule S."/>
            <person name="Price C."/>
            <person name="Quail M.A."/>
            <person name="Rabbinowitsch E."/>
            <person name="Rutherford K."/>
            <person name="Sanders M."/>
            <person name="Simmonds M."/>
            <person name="Songsivilai S."/>
            <person name="Stevens K."/>
            <person name="Tumapa S."/>
            <person name="Vesaratchavest M."/>
            <person name="Whitehead S."/>
            <person name="Yeats C."/>
            <person name="Barrell B.G."/>
            <person name="Oyston P.C.F."/>
            <person name="Parkhill J."/>
        </authorList>
    </citation>
    <scope>NUCLEOTIDE SEQUENCE [LARGE SCALE GENOMIC DNA]</scope>
    <source>
        <strain>K96243</strain>
    </source>
</reference>
<feature type="chain" id="PRO_0000163893" description="tRNA dimethylallyltransferase">
    <location>
        <begin position="1"/>
        <end position="324"/>
    </location>
</feature>
<feature type="region of interest" description="Interaction with substrate tRNA" evidence="1">
    <location>
        <begin position="42"/>
        <end position="45"/>
    </location>
</feature>
<feature type="region of interest" description="Interaction with substrate tRNA" evidence="1">
    <location>
        <begin position="166"/>
        <end position="170"/>
    </location>
</feature>
<feature type="region of interest" description="Interaction with substrate tRNA" evidence="1">
    <location>
        <begin position="251"/>
        <end position="256"/>
    </location>
</feature>
<feature type="binding site" evidence="1">
    <location>
        <begin position="17"/>
        <end position="24"/>
    </location>
    <ligand>
        <name>ATP</name>
        <dbReference type="ChEBI" id="CHEBI:30616"/>
    </ligand>
</feature>
<feature type="binding site" evidence="1">
    <location>
        <begin position="19"/>
        <end position="24"/>
    </location>
    <ligand>
        <name>substrate</name>
    </ligand>
</feature>
<feature type="site" description="Interaction with substrate tRNA" evidence="1">
    <location>
        <position position="108"/>
    </location>
</feature>
<feature type="site" description="Interaction with substrate tRNA" evidence="1">
    <location>
        <position position="130"/>
    </location>
</feature>